<feature type="chain" id="PRO_1000053692" description="Uracil phosphoribosyltransferase">
    <location>
        <begin position="1"/>
        <end position="216"/>
    </location>
</feature>
<feature type="binding site" evidence="1">
    <location>
        <position position="85"/>
    </location>
    <ligand>
        <name>5-phospho-alpha-D-ribose 1-diphosphate</name>
        <dbReference type="ChEBI" id="CHEBI:58017"/>
    </ligand>
</feature>
<feature type="binding site" evidence="1">
    <location>
        <position position="110"/>
    </location>
    <ligand>
        <name>5-phospho-alpha-D-ribose 1-diphosphate</name>
        <dbReference type="ChEBI" id="CHEBI:58017"/>
    </ligand>
</feature>
<feature type="binding site" evidence="1">
    <location>
        <begin position="135"/>
        <end position="143"/>
    </location>
    <ligand>
        <name>5-phospho-alpha-D-ribose 1-diphosphate</name>
        <dbReference type="ChEBI" id="CHEBI:58017"/>
    </ligand>
</feature>
<feature type="binding site" evidence="1">
    <location>
        <position position="200"/>
    </location>
    <ligand>
        <name>uracil</name>
        <dbReference type="ChEBI" id="CHEBI:17568"/>
    </ligand>
</feature>
<feature type="binding site" evidence="1">
    <location>
        <begin position="205"/>
        <end position="207"/>
    </location>
    <ligand>
        <name>uracil</name>
        <dbReference type="ChEBI" id="CHEBI:17568"/>
    </ligand>
</feature>
<feature type="binding site" evidence="1">
    <location>
        <position position="206"/>
    </location>
    <ligand>
        <name>5-phospho-alpha-D-ribose 1-diphosphate</name>
        <dbReference type="ChEBI" id="CHEBI:58017"/>
    </ligand>
</feature>
<dbReference type="EC" id="2.4.2.9" evidence="1"/>
<dbReference type="EMBL" id="CP000614">
    <property type="protein sequence ID" value="ABO55377.1"/>
    <property type="molecule type" value="Genomic_DNA"/>
</dbReference>
<dbReference type="SMR" id="A4JGH4"/>
<dbReference type="KEGG" id="bvi:Bcep1808_2378"/>
<dbReference type="eggNOG" id="COG0035">
    <property type="taxonomic scope" value="Bacteria"/>
</dbReference>
<dbReference type="HOGENOM" id="CLU_067096_2_2_4"/>
<dbReference type="UniPathway" id="UPA00574">
    <property type="reaction ID" value="UER00636"/>
</dbReference>
<dbReference type="Proteomes" id="UP000002287">
    <property type="component" value="Chromosome 1"/>
</dbReference>
<dbReference type="GO" id="GO:0005525">
    <property type="term" value="F:GTP binding"/>
    <property type="evidence" value="ECO:0007669"/>
    <property type="project" value="UniProtKB-KW"/>
</dbReference>
<dbReference type="GO" id="GO:0000287">
    <property type="term" value="F:magnesium ion binding"/>
    <property type="evidence" value="ECO:0007669"/>
    <property type="project" value="UniProtKB-UniRule"/>
</dbReference>
<dbReference type="GO" id="GO:0004845">
    <property type="term" value="F:uracil phosphoribosyltransferase activity"/>
    <property type="evidence" value="ECO:0007669"/>
    <property type="project" value="UniProtKB-UniRule"/>
</dbReference>
<dbReference type="GO" id="GO:0044206">
    <property type="term" value="P:UMP salvage"/>
    <property type="evidence" value="ECO:0007669"/>
    <property type="project" value="UniProtKB-UniRule"/>
</dbReference>
<dbReference type="GO" id="GO:0006223">
    <property type="term" value="P:uracil salvage"/>
    <property type="evidence" value="ECO:0007669"/>
    <property type="project" value="InterPro"/>
</dbReference>
<dbReference type="CDD" id="cd06223">
    <property type="entry name" value="PRTases_typeI"/>
    <property type="match status" value="1"/>
</dbReference>
<dbReference type="FunFam" id="3.40.50.2020:FF:000003">
    <property type="entry name" value="Uracil phosphoribosyltransferase"/>
    <property type="match status" value="1"/>
</dbReference>
<dbReference type="Gene3D" id="3.40.50.2020">
    <property type="match status" value="1"/>
</dbReference>
<dbReference type="HAMAP" id="MF_01218_B">
    <property type="entry name" value="Upp_B"/>
    <property type="match status" value="1"/>
</dbReference>
<dbReference type="InterPro" id="IPR000836">
    <property type="entry name" value="PRibTrfase_dom"/>
</dbReference>
<dbReference type="InterPro" id="IPR029057">
    <property type="entry name" value="PRTase-like"/>
</dbReference>
<dbReference type="InterPro" id="IPR034332">
    <property type="entry name" value="Upp_B"/>
</dbReference>
<dbReference type="InterPro" id="IPR050054">
    <property type="entry name" value="UPRTase/APRTase"/>
</dbReference>
<dbReference type="InterPro" id="IPR005765">
    <property type="entry name" value="Ura_phspho_trans"/>
</dbReference>
<dbReference type="NCBIfam" id="NF001097">
    <property type="entry name" value="PRK00129.1"/>
    <property type="match status" value="1"/>
</dbReference>
<dbReference type="NCBIfam" id="TIGR01091">
    <property type="entry name" value="upp"/>
    <property type="match status" value="1"/>
</dbReference>
<dbReference type="PANTHER" id="PTHR32315">
    <property type="entry name" value="ADENINE PHOSPHORIBOSYLTRANSFERASE"/>
    <property type="match status" value="1"/>
</dbReference>
<dbReference type="PANTHER" id="PTHR32315:SF4">
    <property type="entry name" value="URACIL PHOSPHORIBOSYLTRANSFERASE, CHLOROPLASTIC"/>
    <property type="match status" value="1"/>
</dbReference>
<dbReference type="Pfam" id="PF14681">
    <property type="entry name" value="UPRTase"/>
    <property type="match status" value="1"/>
</dbReference>
<dbReference type="SUPFAM" id="SSF53271">
    <property type="entry name" value="PRTase-like"/>
    <property type="match status" value="1"/>
</dbReference>
<name>UPP_BURVG</name>
<protein>
    <recommendedName>
        <fullName evidence="1">Uracil phosphoribosyltransferase</fullName>
        <ecNumber evidence="1">2.4.2.9</ecNumber>
    </recommendedName>
    <alternativeName>
        <fullName evidence="1">UMP pyrophosphorylase</fullName>
    </alternativeName>
    <alternativeName>
        <fullName evidence="1">UPRTase</fullName>
    </alternativeName>
</protein>
<keyword id="KW-0021">Allosteric enzyme</keyword>
<keyword id="KW-0328">Glycosyltransferase</keyword>
<keyword id="KW-0342">GTP-binding</keyword>
<keyword id="KW-0460">Magnesium</keyword>
<keyword id="KW-0547">Nucleotide-binding</keyword>
<keyword id="KW-0808">Transferase</keyword>
<sequence length="216" mass="23955">MKQDSRFPNLFILDHPLIQHKLTHMRDKDTSTRTFRELLREITLLMGYEITRNLPITTRRVATPLVEVDAPVIAGKKLAIVPVLRAGIGMSDGLLDLVPSARVGHIGVYRADDHRPVEYLVRLPDLEDRVFILCDPMVATGYSAVHAVDVLKRRNVPAANIVFVALVAAPEGVQVFQDAHPDVKLYVASLDSHLNEHAYIVPGLGDAGDRLFGTKN</sequence>
<accession>A4JGH4</accession>
<proteinExistence type="inferred from homology"/>
<reference key="1">
    <citation type="submission" date="2007-03" db="EMBL/GenBank/DDBJ databases">
        <title>Complete sequence of chromosome 1 of Burkholderia vietnamiensis G4.</title>
        <authorList>
            <consortium name="US DOE Joint Genome Institute"/>
            <person name="Copeland A."/>
            <person name="Lucas S."/>
            <person name="Lapidus A."/>
            <person name="Barry K."/>
            <person name="Detter J.C."/>
            <person name="Glavina del Rio T."/>
            <person name="Hammon N."/>
            <person name="Israni S."/>
            <person name="Dalin E."/>
            <person name="Tice H."/>
            <person name="Pitluck S."/>
            <person name="Chain P."/>
            <person name="Malfatti S."/>
            <person name="Shin M."/>
            <person name="Vergez L."/>
            <person name="Schmutz J."/>
            <person name="Larimer F."/>
            <person name="Land M."/>
            <person name="Hauser L."/>
            <person name="Kyrpides N."/>
            <person name="Tiedje J."/>
            <person name="Richardson P."/>
        </authorList>
    </citation>
    <scope>NUCLEOTIDE SEQUENCE [LARGE SCALE GENOMIC DNA]</scope>
    <source>
        <strain>G4 / LMG 22486</strain>
    </source>
</reference>
<organism>
    <name type="scientific">Burkholderia vietnamiensis (strain G4 / LMG 22486)</name>
    <name type="common">Burkholderia cepacia (strain R1808)</name>
    <dbReference type="NCBI Taxonomy" id="269482"/>
    <lineage>
        <taxon>Bacteria</taxon>
        <taxon>Pseudomonadati</taxon>
        <taxon>Pseudomonadota</taxon>
        <taxon>Betaproteobacteria</taxon>
        <taxon>Burkholderiales</taxon>
        <taxon>Burkholderiaceae</taxon>
        <taxon>Burkholderia</taxon>
        <taxon>Burkholderia cepacia complex</taxon>
    </lineage>
</organism>
<comment type="function">
    <text evidence="1">Catalyzes the conversion of uracil and 5-phospho-alpha-D-ribose 1-diphosphate (PRPP) to UMP and diphosphate.</text>
</comment>
<comment type="catalytic activity">
    <reaction evidence="1">
        <text>UMP + diphosphate = 5-phospho-alpha-D-ribose 1-diphosphate + uracil</text>
        <dbReference type="Rhea" id="RHEA:13017"/>
        <dbReference type="ChEBI" id="CHEBI:17568"/>
        <dbReference type="ChEBI" id="CHEBI:33019"/>
        <dbReference type="ChEBI" id="CHEBI:57865"/>
        <dbReference type="ChEBI" id="CHEBI:58017"/>
        <dbReference type="EC" id="2.4.2.9"/>
    </reaction>
</comment>
<comment type="cofactor">
    <cofactor evidence="1">
        <name>Mg(2+)</name>
        <dbReference type="ChEBI" id="CHEBI:18420"/>
    </cofactor>
    <text evidence="1">Binds 1 Mg(2+) ion per subunit. The magnesium is bound as Mg-PRPP.</text>
</comment>
<comment type="activity regulation">
    <text evidence="1">Allosterically activated by GTP.</text>
</comment>
<comment type="pathway">
    <text evidence="1">Pyrimidine metabolism; UMP biosynthesis via salvage pathway; UMP from uracil: step 1/1.</text>
</comment>
<comment type="similarity">
    <text evidence="1">Belongs to the UPRTase family.</text>
</comment>
<gene>
    <name evidence="1" type="primary">upp</name>
    <name type="ordered locus">Bcep1808_2378</name>
</gene>
<evidence type="ECO:0000255" key="1">
    <source>
        <dbReference type="HAMAP-Rule" id="MF_01218"/>
    </source>
</evidence>